<name>CORA_ECOLI</name>
<comment type="function">
    <text evidence="1 4">Mediates influx of magnesium ions. Can also mediate cobalt and manganese uptake (PubMed:780341). Alternates between open and closed states. Activated by low cytoplasmic Mg(2+) levels. Inactive when cytoplasmic Mg(2+) levels are high (By similarity).</text>
</comment>
<comment type="catalytic activity">
    <reaction evidence="6">
        <text>Mg(2+)(in) = Mg(2+)(out)</text>
        <dbReference type="Rhea" id="RHEA:29827"/>
        <dbReference type="ChEBI" id="CHEBI:18420"/>
    </reaction>
</comment>
<comment type="catalytic activity">
    <reaction evidence="6">
        <text>Co(2+)(in) = Co(2+)(out)</text>
        <dbReference type="Rhea" id="RHEA:28578"/>
        <dbReference type="ChEBI" id="CHEBI:48828"/>
    </reaction>
</comment>
<comment type="catalytic activity">
    <reaction evidence="6">
        <text>Mn(2+)(in) = Mn(2+)(out)</text>
        <dbReference type="Rhea" id="RHEA:28699"/>
        <dbReference type="ChEBI" id="CHEBI:29035"/>
    </reaction>
</comment>
<comment type="subunit">
    <text evidence="1">Homopentamer. In the absence of Mg(2+), interactions between subunits are weakened, and dimers, trimers and tetramers can be observed in vitro (By similarity).</text>
</comment>
<comment type="subcellular location">
    <subcellularLocation>
        <location evidence="3 6">Cell inner membrane</location>
        <topology evidence="1">Multi-pass membrane protein</topology>
    </subcellularLocation>
</comment>
<comment type="domain">
    <text evidence="1">The central ion permeation pathway is formed by the first transmembrane domain from each of the five subunits. Mg(2+) binding strengthens interactions between subunits and leads to the formation of a symmetrical homopentamer surrounding a closed ion permeation pathway. Co(2+) binding also induces a conformation change. Low Mg(2+) concentrations trigger both a conformation change within each subunit and a loosening of the interactions between subunits. This results in an open ion conduction pathway. In addition, this results in a less symmetrical shape of the whole complex.</text>
</comment>
<comment type="similarity">
    <text evidence="5">Belongs to the CorA metal ion transporter (MIT) (TC 1.A.35) family.</text>
</comment>
<keyword id="KW-0002">3D-structure</keyword>
<keyword id="KW-0997">Cell inner membrane</keyword>
<keyword id="KW-1003">Cell membrane</keyword>
<keyword id="KW-0170">Cobalt</keyword>
<keyword id="KW-0406">Ion transport</keyword>
<keyword id="KW-0460">Magnesium</keyword>
<keyword id="KW-0464">Manganese</keyword>
<keyword id="KW-0472">Membrane</keyword>
<keyword id="KW-1185">Reference proteome</keyword>
<keyword id="KW-0812">Transmembrane</keyword>
<keyword id="KW-1133">Transmembrane helix</keyword>
<keyword id="KW-0813">Transport</keyword>
<organism>
    <name type="scientific">Escherichia coli (strain K12)</name>
    <dbReference type="NCBI Taxonomy" id="83333"/>
    <lineage>
        <taxon>Bacteria</taxon>
        <taxon>Pseudomonadati</taxon>
        <taxon>Pseudomonadota</taxon>
        <taxon>Gammaproteobacteria</taxon>
        <taxon>Enterobacterales</taxon>
        <taxon>Enterobacteriaceae</taxon>
        <taxon>Escherichia</taxon>
    </lineage>
</organism>
<proteinExistence type="evidence at protein level"/>
<reference key="1">
    <citation type="journal article" date="1993" name="J. Biol. Chem.">
        <title>Sequence and topology of the CorA magnesium transport systems of Salmonella typhimurium and Escherichia coli. Identification of a new class of transport protein.</title>
        <authorList>
            <person name="Smith R.L."/>
            <person name="Banks J.L."/>
            <person name="Snavely M.D."/>
            <person name="Maguire M.E."/>
        </authorList>
    </citation>
    <scope>NUCLEOTIDE SEQUENCE [GENOMIC DNA]</scope>
</reference>
<reference key="2">
    <citation type="submission" date="1993-01" db="EMBL/GenBank/DDBJ databases">
        <title>Physical map of the corA region of the E.coli chromosome.</title>
        <authorList>
            <person name="Ohmori H."/>
        </authorList>
    </citation>
    <scope>NUCLEOTIDE SEQUENCE [GENOMIC DNA]</scope>
    <source>
        <strain>K12</strain>
    </source>
</reference>
<reference key="3">
    <citation type="journal article" date="1992" name="Science">
        <title>Analysis of the Escherichia coli genome: DNA sequence of the region from 84.5 to 86.5 minutes.</title>
        <authorList>
            <person name="Daniels D.L."/>
            <person name="Plunkett G. III"/>
            <person name="Burland V.D."/>
            <person name="Blattner F.R."/>
        </authorList>
    </citation>
    <scope>NUCLEOTIDE SEQUENCE [LARGE SCALE GENOMIC DNA]</scope>
    <source>
        <strain>K12 / MG1655 / ATCC 47076</strain>
    </source>
</reference>
<reference key="4">
    <citation type="journal article" date="1993" name="Nucleic Acids Res.">
        <title>Analysis of the Escherichia coli genome. III. DNA sequence of the region from 87.2 to 89.2 minutes.</title>
        <authorList>
            <person name="Plunkett G. III"/>
            <person name="Burland V."/>
            <person name="Daniels D.L."/>
            <person name="Blattner F.R."/>
        </authorList>
    </citation>
    <scope>NUCLEOTIDE SEQUENCE [LARGE SCALE GENOMIC DNA]</scope>
    <scope>SEQUENCE REVISION</scope>
    <source>
        <strain>K12 / MG1655 / ATCC 47076</strain>
    </source>
</reference>
<reference key="5">
    <citation type="journal article" date="1997" name="Science">
        <title>The complete genome sequence of Escherichia coli K-12.</title>
        <authorList>
            <person name="Blattner F.R."/>
            <person name="Plunkett G. III"/>
            <person name="Bloch C.A."/>
            <person name="Perna N.T."/>
            <person name="Burland V."/>
            <person name="Riley M."/>
            <person name="Collado-Vides J."/>
            <person name="Glasner J.D."/>
            <person name="Rode C.K."/>
            <person name="Mayhew G.F."/>
            <person name="Gregor J."/>
            <person name="Davis N.W."/>
            <person name="Kirkpatrick H.A."/>
            <person name="Goeden M.A."/>
            <person name="Rose D.J."/>
            <person name="Mau B."/>
            <person name="Shao Y."/>
        </authorList>
    </citation>
    <scope>NUCLEOTIDE SEQUENCE [LARGE SCALE GENOMIC DNA]</scope>
    <source>
        <strain>K12 / MG1655 / ATCC 47076</strain>
    </source>
</reference>
<reference key="6">
    <citation type="journal article" date="2006" name="Mol. Syst. Biol.">
        <title>Highly accurate genome sequences of Escherichia coli K-12 strains MG1655 and W3110.</title>
        <authorList>
            <person name="Hayashi K."/>
            <person name="Morooka N."/>
            <person name="Yamamoto Y."/>
            <person name="Fujita K."/>
            <person name="Isono K."/>
            <person name="Choi S."/>
            <person name="Ohtsubo E."/>
            <person name="Baba T."/>
            <person name="Wanner B.L."/>
            <person name="Mori H."/>
            <person name="Horiuchi T."/>
        </authorList>
    </citation>
    <scope>NUCLEOTIDE SEQUENCE [LARGE SCALE GENOMIC DNA]</scope>
    <source>
        <strain>K12 / W3110 / ATCC 27325 / DSM 5911</strain>
    </source>
</reference>
<reference key="7">
    <citation type="journal article" date="1976" name="J. Bacteriol.">
        <title>Mutants in three genes affecting transport of magnesium in Escherichia coli: genetics and physiology.</title>
        <authorList>
            <person name="Park M.H."/>
            <person name="Wong B.B."/>
            <person name="Lusk J.E."/>
        </authorList>
    </citation>
    <scope>FUNCTION</scope>
    <scope>CATALYTIC ACTIVITY</scope>
    <scope>SUBCELLULAR LOCATION</scope>
</reference>
<reference key="8">
    <citation type="journal article" date="2005" name="Science">
        <title>Global topology analysis of the Escherichia coli inner membrane proteome.</title>
        <authorList>
            <person name="Daley D.O."/>
            <person name="Rapp M."/>
            <person name="Granseth E."/>
            <person name="Melen K."/>
            <person name="Drew D."/>
            <person name="von Heijne G."/>
        </authorList>
    </citation>
    <scope>TOPOLOGY [LARGE SCALE ANALYSIS]</scope>
    <scope>SUBCELLULAR LOCATION</scope>
    <source>
        <strain>K12 / MG1655 / ATCC 47076</strain>
    </source>
</reference>
<evidence type="ECO:0000250" key="1">
    <source>
        <dbReference type="UniProtKB" id="Q9WZ31"/>
    </source>
</evidence>
<evidence type="ECO:0000255" key="2"/>
<evidence type="ECO:0000269" key="3">
    <source>
    </source>
</evidence>
<evidence type="ECO:0000269" key="4">
    <source>
    </source>
</evidence>
<evidence type="ECO:0000305" key="5"/>
<evidence type="ECO:0000305" key="6">
    <source>
    </source>
</evidence>
<evidence type="ECO:0007829" key="7">
    <source>
        <dbReference type="PDB" id="5N77"/>
    </source>
</evidence>
<sequence>MLSAFQLENNRLTRLEVEESQPLVNAVWIDLVEPDDDERLRVQSELGQSLATRPELEDIEASARFFEDDDGLHIHSFFFFEDAEDHAGNSTVAFTIRDGRLFTLRERELPAFRLYRMRARSQSMVDGNAYELLLDLFETKIEQLADEIENIYSDLEQLSRVIMEGHQGDEYDEALSTLAELEDIGWKVRLCLMDTQRALNFLVRKARLPGGQLEQAREILRDIESLLPHNESLFQKVNFLMQAAMGFINIEQNRIIKIFSVVSVVFLPPTLVASSYGMNFEFMPELKWSFGYPGAIIFMILAGLAPYLYFKRKNWL</sequence>
<protein>
    <recommendedName>
        <fullName>Magnesium transport protein CorA</fullName>
    </recommendedName>
</protein>
<feature type="chain" id="PRO_0000201527" description="Magnesium transport protein CorA">
    <location>
        <begin position="1"/>
        <end position="316"/>
    </location>
</feature>
<feature type="topological domain" description="Cytoplasmic" evidence="2">
    <location>
        <begin position="1"/>
        <end position="254"/>
    </location>
</feature>
<feature type="transmembrane region" description="Helical" evidence="2">
    <location>
        <begin position="255"/>
        <end position="273"/>
    </location>
</feature>
<feature type="topological domain" description="Periplasmic" evidence="2">
    <location>
        <begin position="274"/>
        <end position="287"/>
    </location>
</feature>
<feature type="transmembrane region" description="Helical" evidence="2">
    <location>
        <begin position="288"/>
        <end position="310"/>
    </location>
</feature>
<feature type="topological domain" description="Cytoplasmic" evidence="3">
    <location>
        <begin position="311"/>
        <end position="316"/>
    </location>
</feature>
<feature type="short sequence motif" description="Probable selectivity filter" evidence="1">
    <location>
        <begin position="277"/>
        <end position="279"/>
    </location>
</feature>
<feature type="site" description="Essential for ion permeation" evidence="1">
    <location>
        <position position="253"/>
    </location>
</feature>
<feature type="sequence conflict" description="In Ref. 1 and 3." evidence="5" ref="1 3">
    <original>SL</original>
    <variation>RP</variation>
    <location>
        <begin position="49"/>
        <end position="50"/>
    </location>
</feature>
<feature type="sequence conflict" description="In Ref. 1; AAB59046." evidence="5" ref="1">
    <original>G</original>
    <variation>A</variation>
    <location>
        <position position="303"/>
    </location>
</feature>
<feature type="strand" evidence="7">
    <location>
        <begin position="2"/>
        <end position="10"/>
    </location>
</feature>
<feature type="strand" evidence="7">
    <location>
        <begin position="12"/>
        <end position="15"/>
    </location>
</feature>
<feature type="strand" evidence="7">
    <location>
        <begin position="17"/>
        <end position="19"/>
    </location>
</feature>
<feature type="strand" evidence="7">
    <location>
        <begin position="27"/>
        <end position="33"/>
    </location>
</feature>
<feature type="helix" evidence="7">
    <location>
        <begin position="36"/>
        <end position="45"/>
    </location>
</feature>
<feature type="helix" evidence="7">
    <location>
        <begin position="53"/>
        <end position="56"/>
    </location>
</feature>
<feature type="helix" evidence="7">
    <location>
        <begin position="61"/>
        <end position="64"/>
    </location>
</feature>
<feature type="strand" evidence="7">
    <location>
        <begin position="65"/>
        <end position="68"/>
    </location>
</feature>
<feature type="strand" evidence="7">
    <location>
        <begin position="71"/>
        <end position="81"/>
    </location>
</feature>
<feature type="strand" evidence="7">
    <location>
        <begin position="87"/>
        <end position="97"/>
    </location>
</feature>
<feature type="strand" evidence="7">
    <location>
        <begin position="100"/>
        <end position="107"/>
    </location>
</feature>
<feature type="helix" evidence="7">
    <location>
        <begin position="110"/>
        <end position="119"/>
    </location>
</feature>
<feature type="helix" evidence="7">
    <location>
        <begin position="129"/>
        <end position="164"/>
    </location>
</feature>
<feature type="helix" evidence="7">
    <location>
        <begin position="169"/>
        <end position="205"/>
    </location>
</feature>
<feature type="helix" evidence="7">
    <location>
        <begin position="210"/>
        <end position="256"/>
    </location>
</feature>
<accession>P0ABI4</accession>
<accession>P27841</accession>
<accession>Q2M8C1</accession>
<gene>
    <name type="primary">corA</name>
    <name type="ordered locus">b3816</name>
    <name type="ordered locus">JW3789</name>
</gene>
<dbReference type="EMBL" id="L11042">
    <property type="protein sequence ID" value="AAB59046.1"/>
    <property type="molecule type" value="Genomic_DNA"/>
</dbReference>
<dbReference type="EMBL" id="L02122">
    <property type="protein sequence ID" value="AAD15038.1"/>
    <property type="molecule type" value="Genomic_DNA"/>
</dbReference>
<dbReference type="EMBL" id="M87049">
    <property type="protein sequence ID" value="AAA67612.1"/>
    <property type="molecule type" value="Genomic_DNA"/>
</dbReference>
<dbReference type="EMBL" id="U00096">
    <property type="protein sequence ID" value="AAC76819.1"/>
    <property type="molecule type" value="Genomic_DNA"/>
</dbReference>
<dbReference type="EMBL" id="AP009048">
    <property type="protein sequence ID" value="BAE77485.1"/>
    <property type="molecule type" value="Genomic_DNA"/>
</dbReference>
<dbReference type="PIR" id="A65186">
    <property type="entry name" value="B47157"/>
</dbReference>
<dbReference type="RefSeq" id="NP_418260.1">
    <property type="nucleotide sequence ID" value="NC_000913.3"/>
</dbReference>
<dbReference type="RefSeq" id="WP_000947159.1">
    <property type="nucleotide sequence ID" value="NZ_STEB01000021.1"/>
</dbReference>
<dbReference type="PDB" id="5N77">
    <property type="method" value="X-ray"/>
    <property type="resolution" value="2.80 A"/>
    <property type="chains" value="A/B/C/D/E=1-257"/>
</dbReference>
<dbReference type="PDB" id="5N78">
    <property type="method" value="X-ray"/>
    <property type="resolution" value="2.85 A"/>
    <property type="chains" value="A/B/C/D/E=1-257"/>
</dbReference>
<dbReference type="PDBsum" id="5N77"/>
<dbReference type="PDBsum" id="5N78"/>
<dbReference type="SMR" id="P0ABI4"/>
<dbReference type="BioGRID" id="4263113">
    <property type="interactions" value="45"/>
</dbReference>
<dbReference type="FunCoup" id="P0ABI4">
    <property type="interactions" value="176"/>
</dbReference>
<dbReference type="IntAct" id="P0ABI4">
    <property type="interactions" value="4"/>
</dbReference>
<dbReference type="STRING" id="511145.b3816"/>
<dbReference type="TCDB" id="1.A.35.1.1">
    <property type="family name" value="the cora metal ion transporter (mit) family"/>
</dbReference>
<dbReference type="jPOST" id="P0ABI4"/>
<dbReference type="PaxDb" id="511145-b3816"/>
<dbReference type="EnsemblBacteria" id="AAC76819">
    <property type="protein sequence ID" value="AAC76819"/>
    <property type="gene ID" value="b3816"/>
</dbReference>
<dbReference type="GeneID" id="93778125"/>
<dbReference type="GeneID" id="948351"/>
<dbReference type="KEGG" id="ecj:JW3789"/>
<dbReference type="KEGG" id="eco:b3816"/>
<dbReference type="KEGG" id="ecoc:C3026_20655"/>
<dbReference type="PATRIC" id="fig|511145.12.peg.3932"/>
<dbReference type="EchoBASE" id="EB1431"/>
<dbReference type="eggNOG" id="COG0598">
    <property type="taxonomic scope" value="Bacteria"/>
</dbReference>
<dbReference type="HOGENOM" id="CLU_007127_5_0_6"/>
<dbReference type="InParanoid" id="P0ABI4"/>
<dbReference type="OMA" id="RQNDDMR"/>
<dbReference type="OrthoDB" id="9803416at2"/>
<dbReference type="PhylomeDB" id="P0ABI4"/>
<dbReference type="BioCyc" id="EcoCyc:CORA-MONOMER"/>
<dbReference type="BioCyc" id="MetaCyc:CORA-MONOMER"/>
<dbReference type="PRO" id="PR:P0ABI4"/>
<dbReference type="Proteomes" id="UP000000625">
    <property type="component" value="Chromosome"/>
</dbReference>
<dbReference type="GO" id="GO:0005886">
    <property type="term" value="C:plasma membrane"/>
    <property type="evidence" value="ECO:0007669"/>
    <property type="project" value="UniProtKB-SubCell"/>
</dbReference>
<dbReference type="GO" id="GO:0015087">
    <property type="term" value="F:cobalt ion transmembrane transporter activity"/>
    <property type="evidence" value="ECO:0000314"/>
    <property type="project" value="EcoCyc"/>
</dbReference>
<dbReference type="GO" id="GO:0015095">
    <property type="term" value="F:magnesium ion transmembrane transporter activity"/>
    <property type="evidence" value="ECO:0000314"/>
    <property type="project" value="EcoCyc"/>
</dbReference>
<dbReference type="GO" id="GO:0015099">
    <property type="term" value="F:nickel cation transmembrane transporter activity"/>
    <property type="evidence" value="ECO:0000314"/>
    <property type="project" value="EcoCyc"/>
</dbReference>
<dbReference type="GO" id="GO:0006824">
    <property type="term" value="P:cobalt ion transport"/>
    <property type="evidence" value="ECO:0000314"/>
    <property type="project" value="EcoCyc"/>
</dbReference>
<dbReference type="GO" id="GO:0015693">
    <property type="term" value="P:magnesium ion transport"/>
    <property type="evidence" value="ECO:0000314"/>
    <property type="project" value="EcoCyc"/>
</dbReference>
<dbReference type="GO" id="GO:0035444">
    <property type="term" value="P:nickel cation transmembrane transport"/>
    <property type="evidence" value="ECO:0000314"/>
    <property type="project" value="EcoCyc"/>
</dbReference>
<dbReference type="CDD" id="cd12835">
    <property type="entry name" value="EcCorA-like_1"/>
    <property type="match status" value="1"/>
</dbReference>
<dbReference type="FunFam" id="1.20.58.340:FF:000001">
    <property type="entry name" value="Magnesium transport protein CorA"/>
    <property type="match status" value="1"/>
</dbReference>
<dbReference type="Gene3D" id="1.20.58.340">
    <property type="entry name" value="Magnesium transport protein CorA, transmembrane region"/>
    <property type="match status" value="1"/>
</dbReference>
<dbReference type="InterPro" id="IPR045861">
    <property type="entry name" value="CorA_cytoplasmic_dom"/>
</dbReference>
<dbReference type="InterPro" id="IPR050829">
    <property type="entry name" value="CorA_MIT"/>
</dbReference>
<dbReference type="InterPro" id="IPR045863">
    <property type="entry name" value="CorA_TM1_TM2"/>
</dbReference>
<dbReference type="InterPro" id="IPR004488">
    <property type="entry name" value="Mg/Co-transport_prot_CorA"/>
</dbReference>
<dbReference type="InterPro" id="IPR002523">
    <property type="entry name" value="MgTranspt_CorA/ZnTranspt_ZntB"/>
</dbReference>
<dbReference type="NCBIfam" id="TIGR00383">
    <property type="entry name" value="corA"/>
    <property type="match status" value="1"/>
</dbReference>
<dbReference type="PANTHER" id="PTHR47685">
    <property type="entry name" value="MAGNESIUM TRANSPORT PROTEIN CORA"/>
    <property type="match status" value="1"/>
</dbReference>
<dbReference type="PANTHER" id="PTHR47685:SF1">
    <property type="entry name" value="MAGNESIUM TRANSPORT PROTEIN CORA"/>
    <property type="match status" value="1"/>
</dbReference>
<dbReference type="Pfam" id="PF01544">
    <property type="entry name" value="CorA"/>
    <property type="match status" value="1"/>
</dbReference>
<dbReference type="SUPFAM" id="SSF143865">
    <property type="entry name" value="CorA soluble domain-like"/>
    <property type="match status" value="1"/>
</dbReference>
<dbReference type="SUPFAM" id="SSF144083">
    <property type="entry name" value="Magnesium transport protein CorA, transmembrane region"/>
    <property type="match status" value="1"/>
</dbReference>